<keyword id="KW-0067">ATP-binding</keyword>
<keyword id="KW-0227">DNA damage</keyword>
<keyword id="KW-0234">DNA repair</keyword>
<keyword id="KW-0238">DNA-binding</keyword>
<keyword id="KW-0547">Nucleotide-binding</keyword>
<keyword id="KW-1185">Reference proteome</keyword>
<proteinExistence type="inferred from homology"/>
<gene>
    <name evidence="1" type="primary">mutS</name>
    <name type="ordered locus">Swit_2761</name>
</gene>
<dbReference type="EMBL" id="CP000699">
    <property type="protein sequence ID" value="ABQ69116.1"/>
    <property type="molecule type" value="Genomic_DNA"/>
</dbReference>
<dbReference type="SMR" id="A5VA00"/>
<dbReference type="STRING" id="392499.Swit_2761"/>
<dbReference type="PaxDb" id="392499-Swit_2761"/>
<dbReference type="KEGG" id="swi:Swit_2761"/>
<dbReference type="eggNOG" id="COG0249">
    <property type="taxonomic scope" value="Bacteria"/>
</dbReference>
<dbReference type="HOGENOM" id="CLU_002472_3_1_5"/>
<dbReference type="OrthoDB" id="9802448at2"/>
<dbReference type="Proteomes" id="UP000001989">
    <property type="component" value="Chromosome"/>
</dbReference>
<dbReference type="GO" id="GO:0005829">
    <property type="term" value="C:cytosol"/>
    <property type="evidence" value="ECO:0007669"/>
    <property type="project" value="TreeGrafter"/>
</dbReference>
<dbReference type="GO" id="GO:0005524">
    <property type="term" value="F:ATP binding"/>
    <property type="evidence" value="ECO:0007669"/>
    <property type="project" value="UniProtKB-UniRule"/>
</dbReference>
<dbReference type="GO" id="GO:0140664">
    <property type="term" value="F:ATP-dependent DNA damage sensor activity"/>
    <property type="evidence" value="ECO:0007669"/>
    <property type="project" value="InterPro"/>
</dbReference>
<dbReference type="GO" id="GO:0003684">
    <property type="term" value="F:damaged DNA binding"/>
    <property type="evidence" value="ECO:0007669"/>
    <property type="project" value="UniProtKB-UniRule"/>
</dbReference>
<dbReference type="GO" id="GO:0030983">
    <property type="term" value="F:mismatched DNA binding"/>
    <property type="evidence" value="ECO:0007669"/>
    <property type="project" value="InterPro"/>
</dbReference>
<dbReference type="GO" id="GO:0006298">
    <property type="term" value="P:mismatch repair"/>
    <property type="evidence" value="ECO:0007669"/>
    <property type="project" value="UniProtKB-UniRule"/>
</dbReference>
<dbReference type="CDD" id="cd03284">
    <property type="entry name" value="ABC_MutS1"/>
    <property type="match status" value="1"/>
</dbReference>
<dbReference type="FunFam" id="3.40.1170.10:FF:000001">
    <property type="entry name" value="DNA mismatch repair protein MutS"/>
    <property type="match status" value="1"/>
</dbReference>
<dbReference type="Gene3D" id="1.10.1420.10">
    <property type="match status" value="2"/>
</dbReference>
<dbReference type="Gene3D" id="6.10.140.430">
    <property type="match status" value="1"/>
</dbReference>
<dbReference type="Gene3D" id="3.40.1170.10">
    <property type="entry name" value="DNA repair protein MutS, domain I"/>
    <property type="match status" value="1"/>
</dbReference>
<dbReference type="Gene3D" id="3.30.420.110">
    <property type="entry name" value="MutS, connector domain"/>
    <property type="match status" value="1"/>
</dbReference>
<dbReference type="Gene3D" id="3.40.50.300">
    <property type="entry name" value="P-loop containing nucleotide triphosphate hydrolases"/>
    <property type="match status" value="1"/>
</dbReference>
<dbReference type="HAMAP" id="MF_00096">
    <property type="entry name" value="MutS"/>
    <property type="match status" value="1"/>
</dbReference>
<dbReference type="InterPro" id="IPR005748">
    <property type="entry name" value="DNA_mismatch_repair_MutS"/>
</dbReference>
<dbReference type="InterPro" id="IPR007695">
    <property type="entry name" value="DNA_mismatch_repair_MutS-lik_N"/>
</dbReference>
<dbReference type="InterPro" id="IPR017261">
    <property type="entry name" value="DNA_mismatch_repair_MutS/MSH"/>
</dbReference>
<dbReference type="InterPro" id="IPR000432">
    <property type="entry name" value="DNA_mismatch_repair_MutS_C"/>
</dbReference>
<dbReference type="InterPro" id="IPR007861">
    <property type="entry name" value="DNA_mismatch_repair_MutS_clamp"/>
</dbReference>
<dbReference type="InterPro" id="IPR007696">
    <property type="entry name" value="DNA_mismatch_repair_MutS_core"/>
</dbReference>
<dbReference type="InterPro" id="IPR016151">
    <property type="entry name" value="DNA_mismatch_repair_MutS_N"/>
</dbReference>
<dbReference type="InterPro" id="IPR036187">
    <property type="entry name" value="DNA_mismatch_repair_MutS_sf"/>
</dbReference>
<dbReference type="InterPro" id="IPR007860">
    <property type="entry name" value="DNA_mmatch_repair_MutS_con_dom"/>
</dbReference>
<dbReference type="InterPro" id="IPR045076">
    <property type="entry name" value="MutS"/>
</dbReference>
<dbReference type="InterPro" id="IPR036678">
    <property type="entry name" value="MutS_con_dom_sf"/>
</dbReference>
<dbReference type="InterPro" id="IPR027417">
    <property type="entry name" value="P-loop_NTPase"/>
</dbReference>
<dbReference type="NCBIfam" id="TIGR01070">
    <property type="entry name" value="mutS1"/>
    <property type="match status" value="1"/>
</dbReference>
<dbReference type="NCBIfam" id="NF003810">
    <property type="entry name" value="PRK05399.1"/>
    <property type="match status" value="1"/>
</dbReference>
<dbReference type="PANTHER" id="PTHR11361:SF34">
    <property type="entry name" value="DNA MISMATCH REPAIR PROTEIN MSH1, MITOCHONDRIAL"/>
    <property type="match status" value="1"/>
</dbReference>
<dbReference type="PANTHER" id="PTHR11361">
    <property type="entry name" value="DNA MISMATCH REPAIR PROTEIN MUTS FAMILY MEMBER"/>
    <property type="match status" value="1"/>
</dbReference>
<dbReference type="Pfam" id="PF01624">
    <property type="entry name" value="MutS_I"/>
    <property type="match status" value="1"/>
</dbReference>
<dbReference type="Pfam" id="PF05188">
    <property type="entry name" value="MutS_II"/>
    <property type="match status" value="1"/>
</dbReference>
<dbReference type="Pfam" id="PF05192">
    <property type="entry name" value="MutS_III"/>
    <property type="match status" value="1"/>
</dbReference>
<dbReference type="Pfam" id="PF05190">
    <property type="entry name" value="MutS_IV"/>
    <property type="match status" value="1"/>
</dbReference>
<dbReference type="Pfam" id="PF00488">
    <property type="entry name" value="MutS_V"/>
    <property type="match status" value="1"/>
</dbReference>
<dbReference type="PIRSF" id="PIRSF037677">
    <property type="entry name" value="DNA_mis_repair_Msh6"/>
    <property type="match status" value="1"/>
</dbReference>
<dbReference type="SMART" id="SM00534">
    <property type="entry name" value="MUTSac"/>
    <property type="match status" value="1"/>
</dbReference>
<dbReference type="SMART" id="SM00533">
    <property type="entry name" value="MUTSd"/>
    <property type="match status" value="1"/>
</dbReference>
<dbReference type="SUPFAM" id="SSF55271">
    <property type="entry name" value="DNA repair protein MutS, domain I"/>
    <property type="match status" value="1"/>
</dbReference>
<dbReference type="SUPFAM" id="SSF53150">
    <property type="entry name" value="DNA repair protein MutS, domain II"/>
    <property type="match status" value="1"/>
</dbReference>
<dbReference type="SUPFAM" id="SSF48334">
    <property type="entry name" value="DNA repair protein MutS, domain III"/>
    <property type="match status" value="1"/>
</dbReference>
<dbReference type="SUPFAM" id="SSF52540">
    <property type="entry name" value="P-loop containing nucleoside triphosphate hydrolases"/>
    <property type="match status" value="1"/>
</dbReference>
<dbReference type="PROSITE" id="PS00486">
    <property type="entry name" value="DNA_MISMATCH_REPAIR_2"/>
    <property type="match status" value="1"/>
</dbReference>
<name>MUTS_RHIWR</name>
<reference key="1">
    <citation type="journal article" date="2010" name="J. Bacteriol.">
        <title>Genome sequence of the dioxin-mineralizing bacterium Sphingomonas wittichii RW1.</title>
        <authorList>
            <person name="Miller T.R."/>
            <person name="Delcher A.L."/>
            <person name="Salzberg S.L."/>
            <person name="Saunders E."/>
            <person name="Detter J.C."/>
            <person name="Halden R.U."/>
        </authorList>
    </citation>
    <scope>NUCLEOTIDE SEQUENCE [LARGE SCALE GENOMIC DNA]</scope>
    <source>
        <strain>DSM 6014 / CCUG 31198 / JCM 15750 / NBRC 105917 / EY 4224 / RW1</strain>
    </source>
</reference>
<protein>
    <recommendedName>
        <fullName evidence="1">DNA mismatch repair protein MutS</fullName>
    </recommendedName>
</protein>
<comment type="function">
    <text evidence="1">This protein is involved in the repair of mismatches in DNA. It is possible that it carries out the mismatch recognition step. This protein has a weak ATPase activity.</text>
</comment>
<comment type="similarity">
    <text evidence="1">Belongs to the DNA mismatch repair MutS family.</text>
</comment>
<accession>A5VA00</accession>
<feature type="chain" id="PRO_0000335228" description="DNA mismatch repair protein MutS">
    <location>
        <begin position="1"/>
        <end position="904"/>
    </location>
</feature>
<feature type="binding site" evidence="1">
    <location>
        <begin position="655"/>
        <end position="662"/>
    </location>
    <ligand>
        <name>ATP</name>
        <dbReference type="ChEBI" id="CHEBI:30616"/>
    </ligand>
</feature>
<sequence>MFARLAFGAWPGSPQVAISVRMAQTAKKDMAPPASAPTPMMAQYLALKAAAEDCLLFYRMGDFFELFFDDAKTASACLDIALTARGEHDGQPIPMCGVPAHSAEGYLARLIKAGHRVAIADQTESPAEAKKRAGSKALVGRAIVRVVTAGTLTEEALLDSRAANWLVAVAGAGQGADRRIGIAAADISTGRFEIAGLIPSALDAELARLDAAEIVVPEDFEEPPAGAVAWPREHFESVRGEERLKRLLGVATLDGFGAFTRAELAAAGALIAYLERAGQGSLPFLQPPRRRVVADHMMIDAATRESLEITLSQAGVRKGSLLDAVDRTVTGAGARLLGADLSAPLTDVGAIEARLDLVALFEGDGALRERLRGALRALPDVGRALGRLVARRGSPRDLGQLRDGLDQARLLHELLGRAAPMPALLAGLLPQLVGHDELVDLLRRALVATPPIDAAQGGYIAEGYDPALDALRGQGGEGRKAIAALEARYRAETGIPSLKIKHNGVLGYHIEVQAKHADPLMTADSGFTHRQTLAGVVRFNAPDLHEQAMRVGQSGEHALAAEAAHLEELMAAALGRTAEIAATADALARLDVAAALAERAAEGGWTRPHFEPHSCFDVIGGRHPVVEAAVAAQGARFVANDCRLSDQERLWLVTGPNMGGKSTFLRQNAAIAILAQAGSPVPATSARLGIVDRLFSRVGASDNLARGRSTFMVEMVETAAILAQATERSFVILDEVGRGTSTYDGLAIAWAVVEAVHDINRCRCLFATHYHELTRLAERLDALSLHHVRAREWKGELVLLHELADGPADRSYGIAVAKLAGLSPPVLARARDVLKKLEAGRAATGGLAAGLDDLPLFAAAAQVEEAAPDPLRHEIETIDVDSLSPREALDILYRLKTLAREAAE</sequence>
<evidence type="ECO:0000255" key="1">
    <source>
        <dbReference type="HAMAP-Rule" id="MF_00096"/>
    </source>
</evidence>
<organism>
    <name type="scientific">Rhizorhabdus wittichii (strain DSM 6014 / CCUG 31198 / JCM 15750 / NBRC 105917 / EY 4224 / RW1)</name>
    <name type="common">Sphingomonas wittichii</name>
    <dbReference type="NCBI Taxonomy" id="392499"/>
    <lineage>
        <taxon>Bacteria</taxon>
        <taxon>Pseudomonadati</taxon>
        <taxon>Pseudomonadota</taxon>
        <taxon>Alphaproteobacteria</taxon>
        <taxon>Sphingomonadales</taxon>
        <taxon>Sphingomonadaceae</taxon>
        <taxon>Rhizorhabdus</taxon>
    </lineage>
</organism>